<organism>
    <name type="scientific">Staphylococcus aureus (strain COL)</name>
    <dbReference type="NCBI Taxonomy" id="93062"/>
    <lineage>
        <taxon>Bacteria</taxon>
        <taxon>Bacillati</taxon>
        <taxon>Bacillota</taxon>
        <taxon>Bacilli</taxon>
        <taxon>Bacillales</taxon>
        <taxon>Staphylococcaceae</taxon>
        <taxon>Staphylococcus</taxon>
    </lineage>
</organism>
<gene>
    <name type="primary">sbcD</name>
    <name type="ordered locus">SACOL1381</name>
</gene>
<dbReference type="EMBL" id="CP000046">
    <property type="protein sequence ID" value="AAW36630.1"/>
    <property type="molecule type" value="Genomic_DNA"/>
</dbReference>
<dbReference type="RefSeq" id="WP_000691284.1">
    <property type="nucleotide sequence ID" value="NZ_JBGOFO010000002.1"/>
</dbReference>
<dbReference type="SMR" id="Q5HG73"/>
<dbReference type="KEGG" id="sac:SACOL1381"/>
<dbReference type="HOGENOM" id="CLU_038045_0_1_9"/>
<dbReference type="Proteomes" id="UP000000530">
    <property type="component" value="Chromosome"/>
</dbReference>
<dbReference type="GO" id="GO:0008408">
    <property type="term" value="F:3'-5' exonuclease activity"/>
    <property type="evidence" value="ECO:0007669"/>
    <property type="project" value="InterPro"/>
</dbReference>
<dbReference type="GO" id="GO:0004519">
    <property type="term" value="F:endonuclease activity"/>
    <property type="evidence" value="ECO:0007669"/>
    <property type="project" value="UniProtKB-KW"/>
</dbReference>
<dbReference type="GO" id="GO:0006310">
    <property type="term" value="P:DNA recombination"/>
    <property type="evidence" value="ECO:0007669"/>
    <property type="project" value="UniProtKB-KW"/>
</dbReference>
<dbReference type="GO" id="GO:0006260">
    <property type="term" value="P:DNA replication"/>
    <property type="evidence" value="ECO:0007669"/>
    <property type="project" value="UniProtKB-KW"/>
</dbReference>
<dbReference type="CDD" id="cd00840">
    <property type="entry name" value="MPP_Mre11_N"/>
    <property type="match status" value="1"/>
</dbReference>
<dbReference type="Gene3D" id="3.60.21.10">
    <property type="match status" value="1"/>
</dbReference>
<dbReference type="InterPro" id="IPR004843">
    <property type="entry name" value="Calcineurin-like_PHP_ApaH"/>
</dbReference>
<dbReference type="InterPro" id="IPR050535">
    <property type="entry name" value="DNA_Repair-Maintenance_Comp"/>
</dbReference>
<dbReference type="InterPro" id="IPR029052">
    <property type="entry name" value="Metallo-depent_PP-like"/>
</dbReference>
<dbReference type="InterPro" id="IPR041796">
    <property type="entry name" value="Mre11_N"/>
</dbReference>
<dbReference type="InterPro" id="IPR053381">
    <property type="entry name" value="SbcCD_nuclease"/>
</dbReference>
<dbReference type="InterPro" id="IPR004593">
    <property type="entry name" value="SbcD"/>
</dbReference>
<dbReference type="InterPro" id="IPR026843">
    <property type="entry name" value="SbcD_C"/>
</dbReference>
<dbReference type="NCBIfam" id="TIGR00619">
    <property type="entry name" value="sbcd"/>
    <property type="match status" value="1"/>
</dbReference>
<dbReference type="NCBIfam" id="NF041753">
    <property type="entry name" value="sbcd_Staph"/>
    <property type="match status" value="1"/>
</dbReference>
<dbReference type="PANTHER" id="PTHR30337">
    <property type="entry name" value="COMPONENT OF ATP-DEPENDENT DSDNA EXONUCLEASE"/>
    <property type="match status" value="1"/>
</dbReference>
<dbReference type="PANTHER" id="PTHR30337:SF0">
    <property type="entry name" value="NUCLEASE SBCCD SUBUNIT D"/>
    <property type="match status" value="1"/>
</dbReference>
<dbReference type="Pfam" id="PF00149">
    <property type="entry name" value="Metallophos"/>
    <property type="match status" value="1"/>
</dbReference>
<dbReference type="Pfam" id="PF12320">
    <property type="entry name" value="SbcD_C"/>
    <property type="match status" value="1"/>
</dbReference>
<dbReference type="SUPFAM" id="SSF56300">
    <property type="entry name" value="Metallo-dependent phosphatases"/>
    <property type="match status" value="1"/>
</dbReference>
<proteinExistence type="inferred from homology"/>
<accession>Q5HG73</accession>
<evidence type="ECO:0000250" key="1"/>
<evidence type="ECO:0000305" key="2"/>
<comment type="function">
    <text evidence="1">SbcCD cleaves DNA hairpin structures. These structures can inhibit DNA replication and are intermediates in certain DNA recombination reactions. The complex acts as a 3'-&gt;5' double strand exonuclease that can open hairpins. It also has a 5' single-strand endonuclease activity (By similarity).</text>
</comment>
<comment type="subunit">
    <text evidence="1">Heterodimer of SbcC and SbcD.</text>
</comment>
<comment type="similarity">
    <text evidence="2">Belongs to the SbcD family.</text>
</comment>
<feature type="chain" id="PRO_0000338479" description="Nuclease SbcCD subunit D">
    <location>
        <begin position="1"/>
        <end position="373"/>
    </location>
</feature>
<name>SBCD_STAAC</name>
<reference key="1">
    <citation type="journal article" date="2005" name="J. Bacteriol.">
        <title>Insights on evolution of virulence and resistance from the complete genome analysis of an early methicillin-resistant Staphylococcus aureus strain and a biofilm-producing methicillin-resistant Staphylococcus epidermidis strain.</title>
        <authorList>
            <person name="Gill S.R."/>
            <person name="Fouts D.E."/>
            <person name="Archer G.L."/>
            <person name="Mongodin E.F."/>
            <person name="DeBoy R.T."/>
            <person name="Ravel J."/>
            <person name="Paulsen I.T."/>
            <person name="Kolonay J.F."/>
            <person name="Brinkac L.M."/>
            <person name="Beanan M.J."/>
            <person name="Dodson R.J."/>
            <person name="Daugherty S.C."/>
            <person name="Madupu R."/>
            <person name="Angiuoli S.V."/>
            <person name="Durkin A.S."/>
            <person name="Haft D.H."/>
            <person name="Vamathevan J.J."/>
            <person name="Khouri H."/>
            <person name="Utterback T.R."/>
            <person name="Lee C."/>
            <person name="Dimitrov G."/>
            <person name="Jiang L."/>
            <person name="Qin H."/>
            <person name="Weidman J."/>
            <person name="Tran K."/>
            <person name="Kang K.H."/>
            <person name="Hance I.R."/>
            <person name="Nelson K.E."/>
            <person name="Fraser C.M."/>
        </authorList>
    </citation>
    <scope>NUCLEOTIDE SEQUENCE [LARGE SCALE GENOMIC DNA]</scope>
    <source>
        <strain>COL</strain>
    </source>
</reference>
<keyword id="KW-0233">DNA recombination</keyword>
<keyword id="KW-0235">DNA replication</keyword>
<keyword id="KW-0255">Endonuclease</keyword>
<keyword id="KW-0269">Exonuclease</keyword>
<keyword id="KW-0378">Hydrolase</keyword>
<keyword id="KW-0540">Nuclease</keyword>
<protein>
    <recommendedName>
        <fullName>Nuclease SbcCD subunit D</fullName>
    </recommendedName>
</protein>
<sequence length="373" mass="42936">MKIIHTADWHLGKILNGKQLLEDQAYILDMFVEKMKEEEPDIIVIAGDLYDTTYPSKDAIMLLEQAIGKLNLELRIPIIIISGNHDGKERLNYGASWFEHNQLFIRTDFTSINSPIEINGVNFYTLPYATVSEMKHYFEDDTIETHQQGITRCIETIAPEIDEDAVNILISHLTVQGGKTSDSERPLTIGTVESVQKGVFDIFDYVMLGHLHHPFSIEDDKIKYSGSLLQYSFSEAGQAKGYRRVTINDGIINDVFIPLKPLRQLEIISGEYNDVINEKVHVKNKDNYLHFKLKNMSHITDPMMSLKQIYPNTLALTNETFNYNEENNAIEISEKDDMSIIEMFYKHITDKELSDIQSKKIKNILENELRKED</sequence>